<evidence type="ECO:0000250" key="1">
    <source>
        <dbReference type="UniProtKB" id="Q9Y242"/>
    </source>
</evidence>
<evidence type="ECO:0000255" key="2">
    <source>
        <dbReference type="PROSITE-ProRule" id="PRU00086"/>
    </source>
</evidence>
<evidence type="ECO:0000255" key="3">
    <source>
        <dbReference type="PROSITE-ProRule" id="PRU00146"/>
    </source>
</evidence>
<evidence type="ECO:0000256" key="4">
    <source>
        <dbReference type="SAM" id="MobiDB-lite"/>
    </source>
</evidence>
<protein>
    <recommendedName>
        <fullName>Transcription factor 19</fullName>
        <shortName>TCF-19</shortName>
    </recommendedName>
</protein>
<name>TCF19_MACMU</name>
<proteinExistence type="inferred from homology"/>
<sequence>MLPCFQLLRIGGGRGGDLYTFHPPAGAGCTYRLGHRADLCDVALRPQQEPGLISGIHAELHAEPRGDDWRVSLEDHSLQGTLVNNVRLPRGHRLELSDGDLLTFGPEGPPGTSPSEFYFMFQQVRVKPQDFAAITIPRSRGETRAGAGFRPMLPSQGAPQRPLSTLSPAPKATLILNSIGSLSKLRPQPLTFSPSWGGPRSLPVPAPPGEVGNAPSAPPPRNRRKSVHRVLAELDDDSQPSESPPPVLMEPRKKLRVDKAPLTPTGNRRGRPRKYPVSAPMAPPAVGGGEPCAAPCCCLPQEETVAWVQCDGCDVWFHVACVGCSIQAAREADFRCPGCRAGIQT</sequence>
<comment type="function">
    <text evidence="1">Potential transcription factor that may play a role in the regulation of genes involved in cell cycle G1/S transition (By similarity). May bind to regulatory elements of genes, including the promoter of the transcription factor FOXO1 (By similarity).</text>
</comment>
<comment type="subcellular location">
    <subcellularLocation>
        <location evidence="1">Nucleus</location>
    </subcellularLocation>
</comment>
<gene>
    <name type="primary">TCF19</name>
</gene>
<reference key="1">
    <citation type="journal article" date="2004" name="Mol. Biol. Evol.">
        <title>Rhesus macaque class I duplicon structures, organization, and evolution within the alpha block of the major histocompatibility complex.</title>
        <authorList>
            <person name="Kulski J.K."/>
            <person name="Anzai T."/>
            <person name="Shiina T."/>
            <person name="Inoko H."/>
        </authorList>
    </citation>
    <scope>NUCLEOTIDE SEQUENCE [LARGE SCALE GENOMIC DNA]</scope>
</reference>
<feature type="chain" id="PRO_0000232912" description="Transcription factor 19">
    <location>
        <begin position="1"/>
        <end position="345"/>
    </location>
</feature>
<feature type="domain" description="FHA" evidence="2">
    <location>
        <begin position="31"/>
        <end position="88"/>
    </location>
</feature>
<feature type="zinc finger region" description="PHD-type" evidence="3">
    <location>
        <begin position="293"/>
        <end position="342"/>
    </location>
</feature>
<feature type="region of interest" description="Disordered" evidence="4">
    <location>
        <begin position="138"/>
        <end position="167"/>
    </location>
</feature>
<feature type="region of interest" description="Disordered" evidence="4">
    <location>
        <begin position="190"/>
        <end position="277"/>
    </location>
</feature>
<feature type="binding site" evidence="3">
    <location>
        <position position="296"/>
    </location>
    <ligand>
        <name>Zn(2+)</name>
        <dbReference type="ChEBI" id="CHEBI:29105"/>
        <label>1</label>
    </ligand>
</feature>
<feature type="binding site" evidence="3">
    <location>
        <position position="298"/>
    </location>
    <ligand>
        <name>Zn(2+)</name>
        <dbReference type="ChEBI" id="CHEBI:29105"/>
        <label>1</label>
    </ligand>
</feature>
<feature type="binding site" evidence="3">
    <location>
        <position position="310"/>
    </location>
    <ligand>
        <name>Zn(2+)</name>
        <dbReference type="ChEBI" id="CHEBI:29105"/>
        <label>2</label>
    </ligand>
</feature>
<feature type="binding site" evidence="3">
    <location>
        <position position="313"/>
    </location>
    <ligand>
        <name>Zn(2+)</name>
        <dbReference type="ChEBI" id="CHEBI:29105"/>
        <label>2</label>
    </ligand>
</feature>
<feature type="binding site" evidence="3">
    <location>
        <position position="318"/>
    </location>
    <ligand>
        <name>Zn(2+)</name>
        <dbReference type="ChEBI" id="CHEBI:29105"/>
        <label>1</label>
    </ligand>
</feature>
<feature type="binding site" evidence="3">
    <location>
        <position position="321"/>
    </location>
    <ligand>
        <name>Zn(2+)</name>
        <dbReference type="ChEBI" id="CHEBI:29105"/>
        <label>1</label>
    </ligand>
</feature>
<feature type="binding site" evidence="3">
    <location>
        <position position="336"/>
    </location>
    <ligand>
        <name>Zn(2+)</name>
        <dbReference type="ChEBI" id="CHEBI:29105"/>
        <label>2</label>
    </ligand>
</feature>
<feature type="binding site" evidence="3">
    <location>
        <position position="339"/>
    </location>
    <ligand>
        <name>Zn(2+)</name>
        <dbReference type="ChEBI" id="CHEBI:29105"/>
        <label>2</label>
    </ligand>
</feature>
<accession>Q5TM48</accession>
<organism>
    <name type="scientific">Macaca mulatta</name>
    <name type="common">Rhesus macaque</name>
    <dbReference type="NCBI Taxonomy" id="9544"/>
    <lineage>
        <taxon>Eukaryota</taxon>
        <taxon>Metazoa</taxon>
        <taxon>Chordata</taxon>
        <taxon>Craniata</taxon>
        <taxon>Vertebrata</taxon>
        <taxon>Euteleostomi</taxon>
        <taxon>Mammalia</taxon>
        <taxon>Eutheria</taxon>
        <taxon>Euarchontoglires</taxon>
        <taxon>Primates</taxon>
        <taxon>Haplorrhini</taxon>
        <taxon>Catarrhini</taxon>
        <taxon>Cercopithecidae</taxon>
        <taxon>Cercopithecinae</taxon>
        <taxon>Macaca</taxon>
    </lineage>
</organism>
<dbReference type="EMBL" id="AB128049">
    <property type="protein sequence ID" value="BAD69746.1"/>
    <property type="molecule type" value="Genomic_DNA"/>
</dbReference>
<dbReference type="RefSeq" id="NP_001108423.1">
    <property type="nucleotide sequence ID" value="NM_001114951.1"/>
</dbReference>
<dbReference type="RefSeq" id="XP_014991391.1">
    <property type="nucleotide sequence ID" value="XM_015135905.1"/>
</dbReference>
<dbReference type="SMR" id="Q5TM48"/>
<dbReference type="FunCoup" id="Q5TM48">
    <property type="interactions" value="892"/>
</dbReference>
<dbReference type="STRING" id="9544.ENSMMUP00000020582"/>
<dbReference type="PaxDb" id="9544-ENSMMUP00000020588"/>
<dbReference type="GeneID" id="714141"/>
<dbReference type="KEGG" id="mcc:714141"/>
<dbReference type="CTD" id="6941"/>
<dbReference type="eggNOG" id="ENOG502RHCY">
    <property type="taxonomic scope" value="Eukaryota"/>
</dbReference>
<dbReference type="HOGENOM" id="CLU_041089_0_0_1"/>
<dbReference type="InParanoid" id="Q5TM48"/>
<dbReference type="OrthoDB" id="436852at2759"/>
<dbReference type="Proteomes" id="UP000006718">
    <property type="component" value="Unassembled WGS sequence"/>
</dbReference>
<dbReference type="GO" id="GO:0005634">
    <property type="term" value="C:nucleus"/>
    <property type="evidence" value="ECO:0000318"/>
    <property type="project" value="GO_Central"/>
</dbReference>
<dbReference type="GO" id="GO:0008270">
    <property type="term" value="F:zinc ion binding"/>
    <property type="evidence" value="ECO:0007669"/>
    <property type="project" value="UniProtKB-KW"/>
</dbReference>
<dbReference type="GO" id="GO:0010468">
    <property type="term" value="P:regulation of gene expression"/>
    <property type="evidence" value="ECO:0000318"/>
    <property type="project" value="GO_Central"/>
</dbReference>
<dbReference type="CDD" id="cd22685">
    <property type="entry name" value="FHA_TCF19"/>
    <property type="match status" value="1"/>
</dbReference>
<dbReference type="CDD" id="cd15609">
    <property type="entry name" value="PHD_TCF19"/>
    <property type="match status" value="1"/>
</dbReference>
<dbReference type="Gene3D" id="2.60.200.20">
    <property type="match status" value="1"/>
</dbReference>
<dbReference type="Gene3D" id="3.30.40.10">
    <property type="entry name" value="Zinc/RING finger domain, C3HC4 (zinc finger)"/>
    <property type="match status" value="1"/>
</dbReference>
<dbReference type="InterPro" id="IPR000253">
    <property type="entry name" value="FHA_dom"/>
</dbReference>
<dbReference type="InterPro" id="IPR008984">
    <property type="entry name" value="SMAD_FHA_dom_sf"/>
</dbReference>
<dbReference type="InterPro" id="IPR042803">
    <property type="entry name" value="TCF19"/>
</dbReference>
<dbReference type="InterPro" id="IPR039095">
    <property type="entry name" value="TCF19_PHD"/>
</dbReference>
<dbReference type="InterPro" id="IPR019786">
    <property type="entry name" value="Zinc_finger_PHD-type_CS"/>
</dbReference>
<dbReference type="InterPro" id="IPR011011">
    <property type="entry name" value="Znf_FYVE_PHD"/>
</dbReference>
<dbReference type="InterPro" id="IPR001965">
    <property type="entry name" value="Znf_PHD"/>
</dbReference>
<dbReference type="InterPro" id="IPR019787">
    <property type="entry name" value="Znf_PHD-finger"/>
</dbReference>
<dbReference type="InterPro" id="IPR013083">
    <property type="entry name" value="Znf_RING/FYVE/PHD"/>
</dbReference>
<dbReference type="PANTHER" id="PTHR15464">
    <property type="entry name" value="TRANSCRIPTION FACTOR 19"/>
    <property type="match status" value="1"/>
</dbReference>
<dbReference type="PANTHER" id="PTHR15464:SF1">
    <property type="entry name" value="TRANSCRIPTION FACTOR 19"/>
    <property type="match status" value="1"/>
</dbReference>
<dbReference type="Pfam" id="PF00498">
    <property type="entry name" value="FHA"/>
    <property type="match status" value="1"/>
</dbReference>
<dbReference type="Pfam" id="PF00628">
    <property type="entry name" value="PHD"/>
    <property type="match status" value="1"/>
</dbReference>
<dbReference type="SMART" id="SM00240">
    <property type="entry name" value="FHA"/>
    <property type="match status" value="1"/>
</dbReference>
<dbReference type="SMART" id="SM00249">
    <property type="entry name" value="PHD"/>
    <property type="match status" value="1"/>
</dbReference>
<dbReference type="SUPFAM" id="SSF57903">
    <property type="entry name" value="FYVE/PHD zinc finger"/>
    <property type="match status" value="1"/>
</dbReference>
<dbReference type="SUPFAM" id="SSF49879">
    <property type="entry name" value="SMAD/FHA domain"/>
    <property type="match status" value="1"/>
</dbReference>
<dbReference type="PROSITE" id="PS50006">
    <property type="entry name" value="FHA_DOMAIN"/>
    <property type="match status" value="1"/>
</dbReference>
<dbReference type="PROSITE" id="PS01359">
    <property type="entry name" value="ZF_PHD_1"/>
    <property type="match status" value="1"/>
</dbReference>
<keyword id="KW-0479">Metal-binding</keyword>
<keyword id="KW-0539">Nucleus</keyword>
<keyword id="KW-1185">Reference proteome</keyword>
<keyword id="KW-0804">Transcription</keyword>
<keyword id="KW-0805">Transcription regulation</keyword>
<keyword id="KW-0862">Zinc</keyword>
<keyword id="KW-0863">Zinc-finger</keyword>